<evidence type="ECO:0000250" key="1"/>
<evidence type="ECO:0000255" key="2"/>
<evidence type="ECO:0000305" key="3"/>
<reference key="1">
    <citation type="journal article" date="2000" name="J. Biol. Chem.">
        <title>Complete sequence of the 24-mer hemocyanin of the tarantula Eurypelma californicum. Structure and intramolecular evolution of the subunits.</title>
        <authorList>
            <person name="Voit R."/>
            <person name="Feldmaier-Fuchs G."/>
            <person name="Schweikardt T."/>
            <person name="Decker H."/>
            <person name="Burmester T."/>
        </authorList>
    </citation>
    <scope>NUCLEOTIDE SEQUENCE [MRNA]</scope>
    <source>
        <tissue>Heart</tissue>
    </source>
</reference>
<name>HCYB_APHSP</name>
<feature type="initiator methionine" description="Removed" evidence="1">
    <location>
        <position position="1"/>
    </location>
</feature>
<feature type="chain" id="PRO_0000204266" description="Hemocyanin B chain">
    <location>
        <begin position="2"/>
        <end position="627"/>
    </location>
</feature>
<feature type="binding site" evidence="1">
    <location>
        <position position="173"/>
    </location>
    <ligand>
        <name>Cu cation</name>
        <dbReference type="ChEBI" id="CHEBI:23378"/>
        <label>1</label>
    </ligand>
</feature>
<feature type="binding site" evidence="1">
    <location>
        <position position="177"/>
    </location>
    <ligand>
        <name>Cu cation</name>
        <dbReference type="ChEBI" id="CHEBI:23378"/>
        <label>1</label>
    </ligand>
</feature>
<feature type="binding site" evidence="1">
    <location>
        <position position="204"/>
    </location>
    <ligand>
        <name>Cu cation</name>
        <dbReference type="ChEBI" id="CHEBI:23378"/>
        <label>1</label>
    </ligand>
</feature>
<feature type="binding site" evidence="1">
    <location>
        <position position="324"/>
    </location>
    <ligand>
        <name>Cu cation</name>
        <dbReference type="ChEBI" id="CHEBI:23378"/>
        <label>2</label>
    </ligand>
</feature>
<feature type="binding site" evidence="1">
    <location>
        <position position="328"/>
    </location>
    <ligand>
        <name>Cu cation</name>
        <dbReference type="ChEBI" id="CHEBI:23378"/>
        <label>2</label>
    </ligand>
</feature>
<feature type="binding site" evidence="1">
    <location>
        <position position="364"/>
    </location>
    <ligand>
        <name>Cu cation</name>
        <dbReference type="ChEBI" id="CHEBI:23378"/>
        <label>2</label>
    </ligand>
</feature>
<feature type="glycosylation site" description="N-linked (GlcNAc...) asparagine" evidence="2">
    <location>
        <position position="312"/>
    </location>
</feature>
<feature type="glycosylation site" description="N-linked (GlcNAc...) asparagine" evidence="2">
    <location>
        <position position="316"/>
    </location>
</feature>
<feature type="disulfide bond" evidence="1">
    <location>
        <begin position="534"/>
        <end position="582"/>
    </location>
</feature>
<accession>Q9NFH9</accession>
<keyword id="KW-0186">Copper</keyword>
<keyword id="KW-1015">Disulfide bond</keyword>
<keyword id="KW-0325">Glycoprotein</keyword>
<keyword id="KW-0479">Metal-binding</keyword>
<keyword id="KW-0561">Oxygen transport</keyword>
<keyword id="KW-0964">Secreted</keyword>
<keyword id="KW-0813">Transport</keyword>
<organism>
    <name type="scientific">Aphonopelma sp.</name>
    <name type="common">American tarantula</name>
    <dbReference type="NCBI Taxonomy" id="29932"/>
    <lineage>
        <taxon>Eukaryota</taxon>
        <taxon>Metazoa</taxon>
        <taxon>Ecdysozoa</taxon>
        <taxon>Arthropoda</taxon>
        <taxon>Chelicerata</taxon>
        <taxon>Arachnida</taxon>
        <taxon>Araneae</taxon>
        <taxon>Mygalomorphae</taxon>
        <taxon>Theraphosidae</taxon>
        <taxon>Aphonopelma</taxon>
    </lineage>
</organism>
<proteinExistence type="evidence at transcript level"/>
<sequence>MPSTAEKQRRILPFFQFTSLSTKDKFGILVQRDPRLAGLGVLGRGVLFSCFHEEHLKEATQLYEVLIECESFEEFLDLCHQAREYVNEGLYVYAVSVAILHRQDCRGVSLPPVQEVFPDKFVPSETLFKAFKEVRLHPDDEEIIVDIEKTGNVKDPEYNLAYYREDIGVNAHHWHWHLVYPATWRPEVVHRIKDRKGELFFYMHQQMCARYDSERLSNGMAPMVPFHNFHEPMEGYSSHLSSGINGMPYAFRPHGRILKDMREVSVQDLERSRERLLDAINLGYVVDPNGLETPLDELHGIDILGAIVESSNDSVNKSYYGSLHNWGHVIMSAVDDPDGRYQLNPGVMSDTATSLRDPIFYRWHRFIDDMFQEYKKSLTPYSSQLQFKGVIVKSVCVRAKTADVVETTFANALLDISHAFNFGRTGPVKVRYNHLTHEPFTYKIVVDNAGTKTRKATVRIFLGPEHDNLGNEFDIGRLRRLMIELDKFTTVLEPGENVIERDSIDSSVTIREQYTYRQLQDGRSNREQTEYCSCGWPNDLLVPKGNEHGMKFRLFVMLTDAVQGQVGDHGATGLCTDAVSYCGAKDQLYPDRYPMGFPFDRDIKADSIPEWLHPNMHFSEVTITHHQ</sequence>
<comment type="function">
    <text>Hemocyanins are copper-containing oxygen carriers occurring freely dissolved in the hemolymph of many mollusks and arthropods.</text>
</comment>
<comment type="subunit">
    <text>Tarantula hemocyanin is a 24-chain polymer with seven different chains identified.</text>
</comment>
<comment type="subcellular location">
    <subcellularLocation>
        <location>Secreted</location>
        <location>Extracellular space</location>
    </subcellularLocation>
</comment>
<comment type="tissue specificity">
    <text>Hemolymph.</text>
</comment>
<comment type="miscellaneous">
    <text>The two copper ions bound each have 3 nitrogen ligands (presumably contributed by His residues) and share a bridging ligand (possibly contributed by a Tyr residue) in addition to binding oxygen.</text>
</comment>
<comment type="similarity">
    <text evidence="3">Belongs to the tyrosinase family. Hemocyanin subfamily.</text>
</comment>
<dbReference type="EMBL" id="AJ290429">
    <property type="protein sequence ID" value="CAB89498.1"/>
    <property type="molecule type" value="mRNA"/>
</dbReference>
<dbReference type="SMR" id="Q9NFH9"/>
<dbReference type="GlyCosmos" id="Q9NFH9">
    <property type="glycosylation" value="2 sites, No reported glycans"/>
</dbReference>
<dbReference type="GO" id="GO:0005576">
    <property type="term" value="C:extracellular region"/>
    <property type="evidence" value="ECO:0007669"/>
    <property type="project" value="UniProtKB-SubCell"/>
</dbReference>
<dbReference type="GO" id="GO:0031404">
    <property type="term" value="F:chloride ion binding"/>
    <property type="evidence" value="ECO:0000250"/>
    <property type="project" value="UniProtKB"/>
</dbReference>
<dbReference type="GO" id="GO:0005507">
    <property type="term" value="F:copper ion binding"/>
    <property type="evidence" value="ECO:0000250"/>
    <property type="project" value="UniProtKB"/>
</dbReference>
<dbReference type="GO" id="GO:0016491">
    <property type="term" value="F:oxidoreductase activity"/>
    <property type="evidence" value="ECO:0007669"/>
    <property type="project" value="InterPro"/>
</dbReference>
<dbReference type="GO" id="GO:0005344">
    <property type="term" value="F:oxygen carrier activity"/>
    <property type="evidence" value="ECO:0007669"/>
    <property type="project" value="UniProtKB-KW"/>
</dbReference>
<dbReference type="FunFam" id="1.10.1280.10:FF:000004">
    <property type="entry name" value="Hemocyanin subunit 2"/>
    <property type="match status" value="1"/>
</dbReference>
<dbReference type="FunFam" id="2.60.40.1520:FF:000001">
    <property type="entry name" value="Hemocyanin subunit 2"/>
    <property type="match status" value="1"/>
</dbReference>
<dbReference type="FunFam" id="1.20.1370.10:FF:000002">
    <property type="entry name" value="Hemocyanin subunit B"/>
    <property type="match status" value="1"/>
</dbReference>
<dbReference type="Gene3D" id="1.10.1280.10">
    <property type="entry name" value="Di-copper center containing domain from catechol oxidase"/>
    <property type="match status" value="1"/>
</dbReference>
<dbReference type="Gene3D" id="2.60.40.1520">
    <property type="entry name" value="Hemocyanin, C-terminal domain"/>
    <property type="match status" value="1"/>
</dbReference>
<dbReference type="Gene3D" id="1.20.1370.10">
    <property type="entry name" value="Hemocyanin, N-terminal domain"/>
    <property type="match status" value="1"/>
</dbReference>
<dbReference type="InterPro" id="IPR008922">
    <property type="entry name" value="Di-copper_centre_dom_sf"/>
</dbReference>
<dbReference type="InterPro" id="IPR013788">
    <property type="entry name" value="Hemocyanin/hexamerin"/>
</dbReference>
<dbReference type="InterPro" id="IPR000896">
    <property type="entry name" value="Hemocyanin/hexamerin_mid_dom"/>
</dbReference>
<dbReference type="InterPro" id="IPR005203">
    <property type="entry name" value="Hemocyanin_C"/>
</dbReference>
<dbReference type="InterPro" id="IPR037020">
    <property type="entry name" value="Hemocyanin_C_sf"/>
</dbReference>
<dbReference type="InterPro" id="IPR005204">
    <property type="entry name" value="Hemocyanin_N"/>
</dbReference>
<dbReference type="InterPro" id="IPR036697">
    <property type="entry name" value="Hemocyanin_N_sf"/>
</dbReference>
<dbReference type="InterPro" id="IPR014756">
    <property type="entry name" value="Ig_E-set"/>
</dbReference>
<dbReference type="InterPro" id="IPR002227">
    <property type="entry name" value="Tyrosinase_Cu-bd"/>
</dbReference>
<dbReference type="PANTHER" id="PTHR11511:SF5">
    <property type="entry name" value="FAT-BODY PROTEIN 1-RELATED"/>
    <property type="match status" value="1"/>
</dbReference>
<dbReference type="PANTHER" id="PTHR11511">
    <property type="entry name" value="LARVAL STORAGE PROTEIN/PHENOLOXIDASE"/>
    <property type="match status" value="1"/>
</dbReference>
<dbReference type="Pfam" id="PF03723">
    <property type="entry name" value="Hemocyanin_C"/>
    <property type="match status" value="1"/>
</dbReference>
<dbReference type="Pfam" id="PF00372">
    <property type="entry name" value="Hemocyanin_M"/>
    <property type="match status" value="1"/>
</dbReference>
<dbReference type="Pfam" id="PF03722">
    <property type="entry name" value="Hemocyanin_N"/>
    <property type="match status" value="1"/>
</dbReference>
<dbReference type="PRINTS" id="PR00187">
    <property type="entry name" value="HAEMOCYANIN"/>
</dbReference>
<dbReference type="SUPFAM" id="SSF48056">
    <property type="entry name" value="Di-copper centre-containing domain"/>
    <property type="match status" value="1"/>
</dbReference>
<dbReference type="SUPFAM" id="SSF81296">
    <property type="entry name" value="E set domains"/>
    <property type="match status" value="1"/>
</dbReference>
<dbReference type="SUPFAM" id="SSF48050">
    <property type="entry name" value="Hemocyanin, N-terminal domain"/>
    <property type="match status" value="1"/>
</dbReference>
<dbReference type="PROSITE" id="PS00209">
    <property type="entry name" value="HEMOCYANIN_1"/>
    <property type="match status" value="1"/>
</dbReference>
<dbReference type="PROSITE" id="PS00210">
    <property type="entry name" value="HEMOCYANIN_2"/>
    <property type="match status" value="1"/>
</dbReference>
<dbReference type="PROSITE" id="PS00498">
    <property type="entry name" value="TYROSINASE_2"/>
    <property type="match status" value="1"/>
</dbReference>
<protein>
    <recommendedName>
        <fullName>Hemocyanin B chain</fullName>
        <shortName>HcB</shortName>
    </recommendedName>
</protein>
<gene>
    <name type="primary">HCB</name>
</gene>